<proteinExistence type="inferred from homology"/>
<keyword id="KW-0997">Cell inner membrane</keyword>
<keyword id="KW-1003">Cell membrane</keyword>
<keyword id="KW-0472">Membrane</keyword>
<keyword id="KW-1185">Reference proteome</keyword>
<keyword id="KW-0812">Transmembrane</keyword>
<keyword id="KW-1133">Transmembrane helix</keyword>
<reference key="1">
    <citation type="journal article" date="2010" name="PLoS ONE">
        <title>Genome sequence of Cronobacter sakazakii BAA-894 and comparative genomic hybridization analysis with other Cronobacter species.</title>
        <authorList>
            <person name="Kucerova E."/>
            <person name="Clifton S.W."/>
            <person name="Xia X.Q."/>
            <person name="Long F."/>
            <person name="Porwollik S."/>
            <person name="Fulton L."/>
            <person name="Fronick C."/>
            <person name="Minx P."/>
            <person name="Kyung K."/>
            <person name="Warren W."/>
            <person name="Fulton R."/>
            <person name="Feng D."/>
            <person name="Wollam A."/>
            <person name="Shah N."/>
            <person name="Bhonagiri V."/>
            <person name="Nash W.E."/>
            <person name="Hallsworth-Pepin K."/>
            <person name="Wilson R.K."/>
            <person name="McClelland M."/>
            <person name="Forsythe S.J."/>
        </authorList>
    </citation>
    <scope>NUCLEOTIDE SEQUENCE [LARGE SCALE GENOMIC DNA]</scope>
    <source>
        <strain>ATCC BAA-894</strain>
    </source>
</reference>
<dbReference type="EMBL" id="CP000783">
    <property type="protein sequence ID" value="ABU75466.1"/>
    <property type="molecule type" value="Genomic_DNA"/>
</dbReference>
<dbReference type="RefSeq" id="WP_012123672.1">
    <property type="nucleotide sequence ID" value="NC_009778.1"/>
</dbReference>
<dbReference type="SMR" id="A7MMB3"/>
<dbReference type="KEGG" id="esa:ESA_00162"/>
<dbReference type="PATRIC" id="fig|290339.8.peg.144"/>
<dbReference type="HOGENOM" id="CLU_168367_0_0_6"/>
<dbReference type="Proteomes" id="UP000000260">
    <property type="component" value="Chromosome"/>
</dbReference>
<dbReference type="GO" id="GO:0045283">
    <property type="term" value="C:fumarate reductase complex"/>
    <property type="evidence" value="ECO:0007669"/>
    <property type="project" value="UniProtKB-UniRule"/>
</dbReference>
<dbReference type="GO" id="GO:0005886">
    <property type="term" value="C:plasma membrane"/>
    <property type="evidence" value="ECO:0007669"/>
    <property type="project" value="UniProtKB-SubCell"/>
</dbReference>
<dbReference type="GO" id="GO:0000104">
    <property type="term" value="F:succinate dehydrogenase activity"/>
    <property type="evidence" value="ECO:0007669"/>
    <property type="project" value="UniProtKB-UniRule"/>
</dbReference>
<dbReference type="GO" id="GO:0006106">
    <property type="term" value="P:fumarate metabolic process"/>
    <property type="evidence" value="ECO:0007669"/>
    <property type="project" value="InterPro"/>
</dbReference>
<dbReference type="CDD" id="cd00547">
    <property type="entry name" value="QFR_TypeD_subunitD"/>
    <property type="match status" value="1"/>
</dbReference>
<dbReference type="FunFam" id="1.20.1300.10:FF:000002">
    <property type="entry name" value="Fumarate reductase subunit D"/>
    <property type="match status" value="1"/>
</dbReference>
<dbReference type="Gene3D" id="1.20.1300.10">
    <property type="entry name" value="Fumarate reductase/succinate dehydrogenase, transmembrane subunit"/>
    <property type="match status" value="1"/>
</dbReference>
<dbReference type="HAMAP" id="MF_00709">
    <property type="entry name" value="Fumarate_red_D"/>
    <property type="match status" value="1"/>
</dbReference>
<dbReference type="InterPro" id="IPR003418">
    <property type="entry name" value="Fumarate_red_D"/>
</dbReference>
<dbReference type="InterPro" id="IPR034804">
    <property type="entry name" value="SQR/QFR_C/D"/>
</dbReference>
<dbReference type="NCBIfam" id="NF003977">
    <property type="entry name" value="PRK05470.1-1"/>
    <property type="match status" value="1"/>
</dbReference>
<dbReference type="Pfam" id="PF02313">
    <property type="entry name" value="Fumarate_red_D"/>
    <property type="match status" value="1"/>
</dbReference>
<dbReference type="PIRSF" id="PIRSF000179">
    <property type="entry name" value="FrdD"/>
    <property type="match status" value="1"/>
</dbReference>
<dbReference type="SUPFAM" id="SSF81343">
    <property type="entry name" value="Fumarate reductase respiratory complex transmembrane subunits"/>
    <property type="match status" value="1"/>
</dbReference>
<feature type="chain" id="PRO_1000045548" description="Fumarate reductase subunit D">
    <location>
        <begin position="1"/>
        <end position="119"/>
    </location>
</feature>
<feature type="transmembrane region" description="Helical" evidence="1">
    <location>
        <begin position="24"/>
        <end position="44"/>
    </location>
</feature>
<feature type="transmembrane region" description="Helical" evidence="1">
    <location>
        <begin position="55"/>
        <end position="75"/>
    </location>
</feature>
<feature type="transmembrane region" description="Helical" evidence="1">
    <location>
        <begin position="99"/>
        <end position="119"/>
    </location>
</feature>
<protein>
    <recommendedName>
        <fullName evidence="1">Fumarate reductase subunit D</fullName>
    </recommendedName>
    <alternativeName>
        <fullName evidence="1">Fumarate reductase 13 kDa hydrophobic protein</fullName>
    </alternativeName>
    <alternativeName>
        <fullName evidence="1">Quinol-fumarate reductase subunit D</fullName>
        <shortName evidence="1">QFR subunit D</shortName>
    </alternativeName>
</protein>
<comment type="function">
    <text evidence="1">Two distinct, membrane-bound, FAD-containing enzymes are responsible for the catalysis of fumarate and succinate interconversion; fumarate reductase is used in anaerobic growth, and succinate dehydrogenase is used in aerobic growth. Anchors the catalytic components of the fumarate reductase complex to the cell inner membrane, binds quinones.</text>
</comment>
<comment type="subunit">
    <text evidence="1">Part of an enzyme complex containing four subunits: a flavoprotein (FrdA), an iron-sulfur protein (FrdB), and two hydrophobic anchor proteins (FrdC and FrdD).</text>
</comment>
<comment type="subcellular location">
    <subcellularLocation>
        <location evidence="1">Cell inner membrane</location>
        <topology evidence="1">Multi-pass membrane protein</topology>
    </subcellularLocation>
</comment>
<comment type="similarity">
    <text evidence="1">Belongs to the FrdD family.</text>
</comment>
<gene>
    <name evidence="1" type="primary">frdD</name>
    <name type="ordered locus">ESA_00162</name>
</gene>
<sequence>MINQHPKRSDEPVFWGLFGAGGMWCAIIAPVIIMLVGILLPLGIGPEGAFSYERVLAFAQSWVGRLFLFLMIVLPLWCGLHRIHHGMHDLKIHVPAGKWVFYGLAAILTVVTLIGVVTL</sequence>
<accession>A7MMB3</accession>
<organism>
    <name type="scientific">Cronobacter sakazakii (strain ATCC BAA-894)</name>
    <name type="common">Enterobacter sakazakii</name>
    <dbReference type="NCBI Taxonomy" id="290339"/>
    <lineage>
        <taxon>Bacteria</taxon>
        <taxon>Pseudomonadati</taxon>
        <taxon>Pseudomonadota</taxon>
        <taxon>Gammaproteobacteria</taxon>
        <taxon>Enterobacterales</taxon>
        <taxon>Enterobacteriaceae</taxon>
        <taxon>Cronobacter</taxon>
    </lineage>
</organism>
<name>FRDD_CROS8</name>
<evidence type="ECO:0000255" key="1">
    <source>
        <dbReference type="HAMAP-Rule" id="MF_00709"/>
    </source>
</evidence>